<evidence type="ECO:0000255" key="1">
    <source>
        <dbReference type="HAMAP-Rule" id="MF_00101"/>
    </source>
</evidence>
<sequence>MIVGHGIDLQEISAIEKVYQRNPRFAQKILTEQELAIFESFPYKRRLSYLAGRWSGKEAFAKAIGTGIGRLTFQDIEILNDVRGCPILTKSPFKGNSFISISHSGNYVQASVILEDKK</sequence>
<name>ACPS_STRPG</name>
<feature type="chain" id="PRO_1000008514" description="Holo-[acyl-carrier-protein] synthase">
    <location>
        <begin position="1"/>
        <end position="118"/>
    </location>
</feature>
<feature type="binding site" evidence="1">
    <location>
        <position position="8"/>
    </location>
    <ligand>
        <name>Mg(2+)</name>
        <dbReference type="ChEBI" id="CHEBI:18420"/>
    </ligand>
</feature>
<feature type="binding site" evidence="1">
    <location>
        <position position="58"/>
    </location>
    <ligand>
        <name>Mg(2+)</name>
        <dbReference type="ChEBI" id="CHEBI:18420"/>
    </ligand>
</feature>
<protein>
    <recommendedName>
        <fullName evidence="1">Holo-[acyl-carrier-protein] synthase</fullName>
        <shortName evidence="1">Holo-ACP synthase</shortName>
        <ecNumber evidence="1">2.7.8.7</ecNumber>
    </recommendedName>
    <alternativeName>
        <fullName evidence="1">4'-phosphopantetheinyl transferase AcpS</fullName>
    </alternativeName>
</protein>
<accession>A2RCT2</accession>
<dbReference type="EC" id="2.7.8.7" evidence="1"/>
<dbReference type="EMBL" id="AM295007">
    <property type="protein sequence ID" value="CAM29655.1"/>
    <property type="molecule type" value="Genomic_DNA"/>
</dbReference>
<dbReference type="RefSeq" id="WP_002983199.1">
    <property type="nucleotide sequence ID" value="NC_009332.1"/>
</dbReference>
<dbReference type="SMR" id="A2RCT2"/>
<dbReference type="GeneID" id="69900361"/>
<dbReference type="KEGG" id="spf:SpyM50313"/>
<dbReference type="HOGENOM" id="CLU_089696_1_2_9"/>
<dbReference type="GO" id="GO:0005737">
    <property type="term" value="C:cytoplasm"/>
    <property type="evidence" value="ECO:0007669"/>
    <property type="project" value="UniProtKB-SubCell"/>
</dbReference>
<dbReference type="GO" id="GO:0008897">
    <property type="term" value="F:holo-[acyl-carrier-protein] synthase activity"/>
    <property type="evidence" value="ECO:0007669"/>
    <property type="project" value="UniProtKB-UniRule"/>
</dbReference>
<dbReference type="GO" id="GO:0000287">
    <property type="term" value="F:magnesium ion binding"/>
    <property type="evidence" value="ECO:0007669"/>
    <property type="project" value="UniProtKB-UniRule"/>
</dbReference>
<dbReference type="GO" id="GO:0006633">
    <property type="term" value="P:fatty acid biosynthetic process"/>
    <property type="evidence" value="ECO:0007669"/>
    <property type="project" value="UniProtKB-UniRule"/>
</dbReference>
<dbReference type="Gene3D" id="3.90.470.20">
    <property type="entry name" value="4'-phosphopantetheinyl transferase domain"/>
    <property type="match status" value="1"/>
</dbReference>
<dbReference type="HAMAP" id="MF_00101">
    <property type="entry name" value="AcpS"/>
    <property type="match status" value="1"/>
</dbReference>
<dbReference type="InterPro" id="IPR008278">
    <property type="entry name" value="4-PPantetheinyl_Trfase_dom"/>
</dbReference>
<dbReference type="InterPro" id="IPR037143">
    <property type="entry name" value="4-PPantetheinyl_Trfase_dom_sf"/>
</dbReference>
<dbReference type="InterPro" id="IPR002582">
    <property type="entry name" value="ACPS"/>
</dbReference>
<dbReference type="InterPro" id="IPR004568">
    <property type="entry name" value="Ppantetheine-prot_Trfase_dom"/>
</dbReference>
<dbReference type="NCBIfam" id="TIGR00516">
    <property type="entry name" value="acpS"/>
    <property type="match status" value="1"/>
</dbReference>
<dbReference type="NCBIfam" id="TIGR00556">
    <property type="entry name" value="pantethn_trn"/>
    <property type="match status" value="1"/>
</dbReference>
<dbReference type="Pfam" id="PF01648">
    <property type="entry name" value="ACPS"/>
    <property type="match status" value="1"/>
</dbReference>
<dbReference type="SUPFAM" id="SSF56214">
    <property type="entry name" value="4'-phosphopantetheinyl transferase"/>
    <property type="match status" value="1"/>
</dbReference>
<comment type="function">
    <text evidence="1">Transfers the 4'-phosphopantetheine moiety from coenzyme A to a Ser of acyl-carrier-protein.</text>
</comment>
<comment type="catalytic activity">
    <reaction evidence="1">
        <text>apo-[ACP] + CoA = holo-[ACP] + adenosine 3',5'-bisphosphate + H(+)</text>
        <dbReference type="Rhea" id="RHEA:12068"/>
        <dbReference type="Rhea" id="RHEA-COMP:9685"/>
        <dbReference type="Rhea" id="RHEA-COMP:9690"/>
        <dbReference type="ChEBI" id="CHEBI:15378"/>
        <dbReference type="ChEBI" id="CHEBI:29999"/>
        <dbReference type="ChEBI" id="CHEBI:57287"/>
        <dbReference type="ChEBI" id="CHEBI:58343"/>
        <dbReference type="ChEBI" id="CHEBI:64479"/>
        <dbReference type="EC" id="2.7.8.7"/>
    </reaction>
</comment>
<comment type="cofactor">
    <cofactor evidence="1">
        <name>Mg(2+)</name>
        <dbReference type="ChEBI" id="CHEBI:18420"/>
    </cofactor>
</comment>
<comment type="subcellular location">
    <subcellularLocation>
        <location evidence="1">Cytoplasm</location>
    </subcellularLocation>
</comment>
<comment type="similarity">
    <text evidence="1">Belongs to the P-Pant transferase superfamily. AcpS family.</text>
</comment>
<keyword id="KW-0963">Cytoplasm</keyword>
<keyword id="KW-0275">Fatty acid biosynthesis</keyword>
<keyword id="KW-0276">Fatty acid metabolism</keyword>
<keyword id="KW-0444">Lipid biosynthesis</keyword>
<keyword id="KW-0443">Lipid metabolism</keyword>
<keyword id="KW-0460">Magnesium</keyword>
<keyword id="KW-0479">Metal-binding</keyword>
<keyword id="KW-0808">Transferase</keyword>
<reference key="1">
    <citation type="journal article" date="2007" name="J. Bacteriol.">
        <title>Complete genome of acute rheumatic fever-associated serotype M5 Streptococcus pyogenes strain Manfredo.</title>
        <authorList>
            <person name="Holden M.T.G."/>
            <person name="Scott A."/>
            <person name="Cherevach I."/>
            <person name="Chillingworth T."/>
            <person name="Churcher C."/>
            <person name="Cronin A."/>
            <person name="Dowd L."/>
            <person name="Feltwell T."/>
            <person name="Hamlin N."/>
            <person name="Holroyd S."/>
            <person name="Jagels K."/>
            <person name="Moule S."/>
            <person name="Mungall K."/>
            <person name="Quail M.A."/>
            <person name="Price C."/>
            <person name="Rabbinowitsch E."/>
            <person name="Sharp S."/>
            <person name="Skelton J."/>
            <person name="Whitehead S."/>
            <person name="Barrell B.G."/>
            <person name="Kehoe M."/>
            <person name="Parkhill J."/>
        </authorList>
    </citation>
    <scope>NUCLEOTIDE SEQUENCE [LARGE SCALE GENOMIC DNA]</scope>
    <source>
        <strain>Manfredo</strain>
    </source>
</reference>
<proteinExistence type="inferred from homology"/>
<organism>
    <name type="scientific">Streptococcus pyogenes serotype M5 (strain Manfredo)</name>
    <dbReference type="NCBI Taxonomy" id="160491"/>
    <lineage>
        <taxon>Bacteria</taxon>
        <taxon>Bacillati</taxon>
        <taxon>Bacillota</taxon>
        <taxon>Bacilli</taxon>
        <taxon>Lactobacillales</taxon>
        <taxon>Streptococcaceae</taxon>
        <taxon>Streptococcus</taxon>
    </lineage>
</organism>
<gene>
    <name evidence="1" type="primary">acpS</name>
    <name type="ordered locus">SpyM50313</name>
</gene>